<proteinExistence type="inferred from homology"/>
<gene>
    <name evidence="1" type="primary">fluC1</name>
    <name evidence="1" type="synonym">crcB1</name>
    <name type="ordered locus">PMN2A_1210</name>
</gene>
<evidence type="ECO:0000255" key="1">
    <source>
        <dbReference type="HAMAP-Rule" id="MF_00454"/>
    </source>
</evidence>
<comment type="function">
    <text evidence="1">Fluoride-specific ion channel. Important for reducing fluoride concentration in the cell, thus reducing its toxicity.</text>
</comment>
<comment type="catalytic activity">
    <reaction evidence="1">
        <text>fluoride(in) = fluoride(out)</text>
        <dbReference type="Rhea" id="RHEA:76159"/>
        <dbReference type="ChEBI" id="CHEBI:17051"/>
    </reaction>
    <physiologicalReaction direction="left-to-right" evidence="1">
        <dbReference type="Rhea" id="RHEA:76160"/>
    </physiologicalReaction>
</comment>
<comment type="activity regulation">
    <text evidence="1">Na(+) is not transported, but it plays an essential structural role and its presence is essential for fluoride channel function.</text>
</comment>
<comment type="subcellular location">
    <subcellularLocation>
        <location evidence="1">Cell inner membrane</location>
        <topology evidence="1">Multi-pass membrane protein</topology>
    </subcellularLocation>
</comment>
<comment type="similarity">
    <text evidence="1">Belongs to the fluoride channel Fluc/FEX (TC 1.A.43) family.</text>
</comment>
<sequence length="114" mass="12845">MGIDIKNNTFFLISLGAFLGALFRWQIDEIFIVNLIGCFLLGFFNSLNILKRYKLTLCVGLCGSMTTFSSWMSHLYKLLNQGLYKLFLLNSLSIVLMGVLSIALGHIFAKRLNA</sequence>
<accession>Q46IH8</accession>
<dbReference type="EMBL" id="CP000095">
    <property type="protein sequence ID" value="AAZ58700.1"/>
    <property type="molecule type" value="Genomic_DNA"/>
</dbReference>
<dbReference type="RefSeq" id="WP_011295554.1">
    <property type="nucleotide sequence ID" value="NC_007335.2"/>
</dbReference>
<dbReference type="SMR" id="Q46IH8"/>
<dbReference type="STRING" id="59920.PMN2A_1210"/>
<dbReference type="KEGG" id="pmn:PMN2A_1210"/>
<dbReference type="HOGENOM" id="CLU_114342_2_1_3"/>
<dbReference type="OrthoDB" id="9815830at2"/>
<dbReference type="PhylomeDB" id="Q46IH8"/>
<dbReference type="Proteomes" id="UP000002535">
    <property type="component" value="Chromosome"/>
</dbReference>
<dbReference type="GO" id="GO:0005886">
    <property type="term" value="C:plasma membrane"/>
    <property type="evidence" value="ECO:0007669"/>
    <property type="project" value="UniProtKB-SubCell"/>
</dbReference>
<dbReference type="GO" id="GO:0062054">
    <property type="term" value="F:fluoride channel activity"/>
    <property type="evidence" value="ECO:0007669"/>
    <property type="project" value="UniProtKB-UniRule"/>
</dbReference>
<dbReference type="GO" id="GO:0046872">
    <property type="term" value="F:metal ion binding"/>
    <property type="evidence" value="ECO:0007669"/>
    <property type="project" value="UniProtKB-KW"/>
</dbReference>
<dbReference type="GO" id="GO:0140114">
    <property type="term" value="P:cellular detoxification of fluoride"/>
    <property type="evidence" value="ECO:0007669"/>
    <property type="project" value="UniProtKB-UniRule"/>
</dbReference>
<dbReference type="HAMAP" id="MF_00454">
    <property type="entry name" value="FluC"/>
    <property type="match status" value="1"/>
</dbReference>
<dbReference type="InterPro" id="IPR003691">
    <property type="entry name" value="FluC"/>
</dbReference>
<dbReference type="PANTHER" id="PTHR28259">
    <property type="entry name" value="FLUORIDE EXPORT PROTEIN 1-RELATED"/>
    <property type="match status" value="1"/>
</dbReference>
<dbReference type="PANTHER" id="PTHR28259:SF1">
    <property type="entry name" value="FLUORIDE EXPORT PROTEIN 1-RELATED"/>
    <property type="match status" value="1"/>
</dbReference>
<dbReference type="Pfam" id="PF02537">
    <property type="entry name" value="CRCB"/>
    <property type="match status" value="1"/>
</dbReference>
<organism>
    <name type="scientific">Prochlorococcus marinus (strain NATL2A)</name>
    <dbReference type="NCBI Taxonomy" id="59920"/>
    <lineage>
        <taxon>Bacteria</taxon>
        <taxon>Bacillati</taxon>
        <taxon>Cyanobacteriota</taxon>
        <taxon>Cyanophyceae</taxon>
        <taxon>Synechococcales</taxon>
        <taxon>Prochlorococcaceae</taxon>
        <taxon>Prochlorococcus</taxon>
    </lineage>
</organism>
<reference key="1">
    <citation type="journal article" date="2007" name="PLoS Genet.">
        <title>Patterns and implications of gene gain and loss in the evolution of Prochlorococcus.</title>
        <authorList>
            <person name="Kettler G.C."/>
            <person name="Martiny A.C."/>
            <person name="Huang K."/>
            <person name="Zucker J."/>
            <person name="Coleman M.L."/>
            <person name="Rodrigue S."/>
            <person name="Chen F."/>
            <person name="Lapidus A."/>
            <person name="Ferriera S."/>
            <person name="Johnson J."/>
            <person name="Steglich C."/>
            <person name="Church G.M."/>
            <person name="Richardson P."/>
            <person name="Chisholm S.W."/>
        </authorList>
    </citation>
    <scope>NUCLEOTIDE SEQUENCE [LARGE SCALE GENOMIC DNA]</scope>
    <source>
        <strain>NATL2A</strain>
    </source>
</reference>
<name>FLUC1_PROMT</name>
<keyword id="KW-0997">Cell inner membrane</keyword>
<keyword id="KW-1003">Cell membrane</keyword>
<keyword id="KW-0407">Ion channel</keyword>
<keyword id="KW-0406">Ion transport</keyword>
<keyword id="KW-0472">Membrane</keyword>
<keyword id="KW-0479">Metal-binding</keyword>
<keyword id="KW-1185">Reference proteome</keyword>
<keyword id="KW-0915">Sodium</keyword>
<keyword id="KW-0812">Transmembrane</keyword>
<keyword id="KW-1133">Transmembrane helix</keyword>
<keyword id="KW-0813">Transport</keyword>
<protein>
    <recommendedName>
        <fullName evidence="1">Fluoride-specific ion channel FluC 1</fullName>
    </recommendedName>
</protein>
<feature type="chain" id="PRO_0000252911" description="Fluoride-specific ion channel FluC 1">
    <location>
        <begin position="1"/>
        <end position="114"/>
    </location>
</feature>
<feature type="transmembrane region" description="Helical" evidence="1">
    <location>
        <begin position="3"/>
        <end position="23"/>
    </location>
</feature>
<feature type="transmembrane region" description="Helical" evidence="1">
    <location>
        <begin position="30"/>
        <end position="50"/>
    </location>
</feature>
<feature type="transmembrane region" description="Helical" evidence="1">
    <location>
        <begin position="55"/>
        <end position="75"/>
    </location>
</feature>
<feature type="transmembrane region" description="Helical" evidence="1">
    <location>
        <begin position="87"/>
        <end position="107"/>
    </location>
</feature>
<feature type="binding site" evidence="1">
    <location>
        <position position="63"/>
    </location>
    <ligand>
        <name>Na(+)</name>
        <dbReference type="ChEBI" id="CHEBI:29101"/>
        <note>structural</note>
    </ligand>
</feature>
<feature type="binding site" evidence="1">
    <location>
        <position position="66"/>
    </location>
    <ligand>
        <name>Na(+)</name>
        <dbReference type="ChEBI" id="CHEBI:29101"/>
        <note>structural</note>
    </ligand>
</feature>